<keyword id="KW-0028">Amino-acid biosynthesis</keyword>
<keyword id="KW-0057">Aromatic amino acid biosynthesis</keyword>
<keyword id="KW-0170">Cobalt</keyword>
<keyword id="KW-0963">Cytoplasm</keyword>
<keyword id="KW-0456">Lyase</keyword>
<keyword id="KW-0479">Metal-binding</keyword>
<keyword id="KW-0520">NAD</keyword>
<keyword id="KW-0547">Nucleotide-binding</keyword>
<keyword id="KW-1185">Reference proteome</keyword>
<keyword id="KW-0862">Zinc</keyword>
<comment type="function">
    <text evidence="1">Catalyzes the conversion of 3-deoxy-D-arabino-heptulosonate 7-phosphate (DAHP) to dehydroquinate (DHQ).</text>
</comment>
<comment type="catalytic activity">
    <reaction evidence="1">
        <text>7-phospho-2-dehydro-3-deoxy-D-arabino-heptonate = 3-dehydroquinate + phosphate</text>
        <dbReference type="Rhea" id="RHEA:21968"/>
        <dbReference type="ChEBI" id="CHEBI:32364"/>
        <dbReference type="ChEBI" id="CHEBI:43474"/>
        <dbReference type="ChEBI" id="CHEBI:58394"/>
        <dbReference type="EC" id="4.2.3.4"/>
    </reaction>
</comment>
<comment type="cofactor">
    <cofactor evidence="1">
        <name>Co(2+)</name>
        <dbReference type="ChEBI" id="CHEBI:48828"/>
    </cofactor>
    <cofactor evidence="1">
        <name>Zn(2+)</name>
        <dbReference type="ChEBI" id="CHEBI:29105"/>
    </cofactor>
    <text evidence="1">Binds 1 divalent metal cation per subunit. Can use either Co(2+) or Zn(2+).</text>
</comment>
<comment type="cofactor">
    <cofactor evidence="1">
        <name>NAD(+)</name>
        <dbReference type="ChEBI" id="CHEBI:57540"/>
    </cofactor>
</comment>
<comment type="pathway">
    <text evidence="1">Metabolic intermediate biosynthesis; chorismate biosynthesis; chorismate from D-erythrose 4-phosphate and phosphoenolpyruvate: step 2/7.</text>
</comment>
<comment type="subcellular location">
    <subcellularLocation>
        <location evidence="1">Cytoplasm</location>
    </subcellularLocation>
</comment>
<comment type="similarity">
    <text evidence="1">Belongs to the sugar phosphate cyclases superfamily. Dehydroquinate synthase family.</text>
</comment>
<sequence>MKLEVNLKQNPYDIIIEKGALKGVGQWVKSLWEPQKIALITDNHVRGLYAEKVKLSLENEGFEVVVFDFLEGEASKNLKTVNKAYEFLIKNGMTRSDGIVALGGGVVGDLAGFVASTYMRGIHFVQVPTSLTAQVDSSIGGKTGVNTPFAKNIVGTFAQPDGVLIDPNVLKTLGKRELIEGMGEVVKYGLIDDPELWQLLDNIDGSVHSILENSETIIYRSCNVKRKIVVEDEFEGGVRMYLNFGHTIGHAVEQTAGYGKVMHGEAVAIGMVQISRVAEKKKLMPQGITRQIAEMCVKFGLPVDYEPWRVEELYTALTHDKKARGNSIKTVIVPEIGKAAINQIPLIEMKEYLEK</sequence>
<proteinExistence type="inferred from homology"/>
<gene>
    <name evidence="1" type="primary">aroB</name>
    <name type="ordered locus">stu0640</name>
</gene>
<protein>
    <recommendedName>
        <fullName evidence="1">3-dehydroquinate synthase</fullName>
        <shortName evidence="1">DHQS</shortName>
        <ecNumber evidence="1">4.2.3.4</ecNumber>
    </recommendedName>
</protein>
<reference key="1">
    <citation type="journal article" date="2004" name="Nat. Biotechnol.">
        <title>Complete sequence and comparative genome analysis of the dairy bacterium Streptococcus thermophilus.</title>
        <authorList>
            <person name="Bolotin A."/>
            <person name="Quinquis B."/>
            <person name="Renault P."/>
            <person name="Sorokin A."/>
            <person name="Ehrlich S.D."/>
            <person name="Kulakauskas S."/>
            <person name="Lapidus A."/>
            <person name="Goltsman E."/>
            <person name="Mazur M."/>
            <person name="Pusch G.D."/>
            <person name="Fonstein M."/>
            <person name="Overbeek R."/>
            <person name="Kyprides N."/>
            <person name="Purnelle B."/>
            <person name="Prozzi D."/>
            <person name="Ngui K."/>
            <person name="Masuy D."/>
            <person name="Hancy F."/>
            <person name="Burteau S."/>
            <person name="Boutry M."/>
            <person name="Delcour J."/>
            <person name="Goffeau A."/>
            <person name="Hols P."/>
        </authorList>
    </citation>
    <scope>NUCLEOTIDE SEQUENCE [LARGE SCALE GENOMIC DNA]</scope>
    <source>
        <strain>ATCC BAA-250 / LMG 18311</strain>
    </source>
</reference>
<accession>Q5M556</accession>
<name>AROB_STRT2</name>
<evidence type="ECO:0000255" key="1">
    <source>
        <dbReference type="HAMAP-Rule" id="MF_00110"/>
    </source>
</evidence>
<dbReference type="EC" id="4.2.3.4" evidence="1"/>
<dbReference type="EMBL" id="CP000023">
    <property type="protein sequence ID" value="AAV60346.1"/>
    <property type="molecule type" value="Genomic_DNA"/>
</dbReference>
<dbReference type="RefSeq" id="WP_011225711.1">
    <property type="nucleotide sequence ID" value="NC_006448.1"/>
</dbReference>
<dbReference type="SMR" id="Q5M556"/>
<dbReference type="STRING" id="264199.stu0640"/>
<dbReference type="GeneID" id="66898548"/>
<dbReference type="KEGG" id="stl:stu0640"/>
<dbReference type="PATRIC" id="fig|264199.4.peg.649"/>
<dbReference type="eggNOG" id="COG0337">
    <property type="taxonomic scope" value="Bacteria"/>
</dbReference>
<dbReference type="HOGENOM" id="CLU_001201_0_1_9"/>
<dbReference type="UniPathway" id="UPA00053">
    <property type="reaction ID" value="UER00085"/>
</dbReference>
<dbReference type="Proteomes" id="UP000001170">
    <property type="component" value="Chromosome"/>
</dbReference>
<dbReference type="GO" id="GO:0005737">
    <property type="term" value="C:cytoplasm"/>
    <property type="evidence" value="ECO:0007669"/>
    <property type="project" value="UniProtKB-SubCell"/>
</dbReference>
<dbReference type="GO" id="GO:0003856">
    <property type="term" value="F:3-dehydroquinate synthase activity"/>
    <property type="evidence" value="ECO:0007669"/>
    <property type="project" value="UniProtKB-UniRule"/>
</dbReference>
<dbReference type="GO" id="GO:0046872">
    <property type="term" value="F:metal ion binding"/>
    <property type="evidence" value="ECO:0007669"/>
    <property type="project" value="UniProtKB-KW"/>
</dbReference>
<dbReference type="GO" id="GO:0000166">
    <property type="term" value="F:nucleotide binding"/>
    <property type="evidence" value="ECO:0007669"/>
    <property type="project" value="UniProtKB-KW"/>
</dbReference>
<dbReference type="GO" id="GO:0008652">
    <property type="term" value="P:amino acid biosynthetic process"/>
    <property type="evidence" value="ECO:0007669"/>
    <property type="project" value="UniProtKB-KW"/>
</dbReference>
<dbReference type="GO" id="GO:0009073">
    <property type="term" value="P:aromatic amino acid family biosynthetic process"/>
    <property type="evidence" value="ECO:0007669"/>
    <property type="project" value="UniProtKB-KW"/>
</dbReference>
<dbReference type="GO" id="GO:0009423">
    <property type="term" value="P:chorismate biosynthetic process"/>
    <property type="evidence" value="ECO:0007669"/>
    <property type="project" value="UniProtKB-UniRule"/>
</dbReference>
<dbReference type="CDD" id="cd08195">
    <property type="entry name" value="DHQS"/>
    <property type="match status" value="1"/>
</dbReference>
<dbReference type="FunFam" id="3.40.50.1970:FF:000001">
    <property type="entry name" value="3-dehydroquinate synthase"/>
    <property type="match status" value="1"/>
</dbReference>
<dbReference type="Gene3D" id="3.40.50.1970">
    <property type="match status" value="1"/>
</dbReference>
<dbReference type="Gene3D" id="1.20.1090.10">
    <property type="entry name" value="Dehydroquinate synthase-like - alpha domain"/>
    <property type="match status" value="1"/>
</dbReference>
<dbReference type="HAMAP" id="MF_00110">
    <property type="entry name" value="DHQ_synthase"/>
    <property type="match status" value="1"/>
</dbReference>
<dbReference type="InterPro" id="IPR050071">
    <property type="entry name" value="Dehydroquinate_synthase"/>
</dbReference>
<dbReference type="InterPro" id="IPR016037">
    <property type="entry name" value="DHQ_synth_AroB"/>
</dbReference>
<dbReference type="InterPro" id="IPR030963">
    <property type="entry name" value="DHQ_synth_fam"/>
</dbReference>
<dbReference type="InterPro" id="IPR030960">
    <property type="entry name" value="DHQS/DOIS_N"/>
</dbReference>
<dbReference type="InterPro" id="IPR056179">
    <property type="entry name" value="DHQS_C"/>
</dbReference>
<dbReference type="NCBIfam" id="TIGR01357">
    <property type="entry name" value="aroB"/>
    <property type="match status" value="1"/>
</dbReference>
<dbReference type="PANTHER" id="PTHR43622">
    <property type="entry name" value="3-DEHYDROQUINATE SYNTHASE"/>
    <property type="match status" value="1"/>
</dbReference>
<dbReference type="PANTHER" id="PTHR43622:SF7">
    <property type="entry name" value="3-DEHYDROQUINATE SYNTHASE, CHLOROPLASTIC"/>
    <property type="match status" value="1"/>
</dbReference>
<dbReference type="Pfam" id="PF01761">
    <property type="entry name" value="DHQ_synthase"/>
    <property type="match status" value="1"/>
</dbReference>
<dbReference type="Pfam" id="PF24621">
    <property type="entry name" value="DHQS_C"/>
    <property type="match status" value="1"/>
</dbReference>
<dbReference type="PIRSF" id="PIRSF001455">
    <property type="entry name" value="DHQ_synth"/>
    <property type="match status" value="1"/>
</dbReference>
<dbReference type="SUPFAM" id="SSF56796">
    <property type="entry name" value="Dehydroquinate synthase-like"/>
    <property type="match status" value="1"/>
</dbReference>
<organism>
    <name type="scientific">Streptococcus thermophilus (strain ATCC BAA-250 / LMG 18311)</name>
    <dbReference type="NCBI Taxonomy" id="264199"/>
    <lineage>
        <taxon>Bacteria</taxon>
        <taxon>Bacillati</taxon>
        <taxon>Bacillota</taxon>
        <taxon>Bacilli</taxon>
        <taxon>Lactobacillales</taxon>
        <taxon>Streptococcaceae</taxon>
        <taxon>Streptococcus</taxon>
    </lineage>
</organism>
<feature type="chain" id="PRO_0000231134" description="3-dehydroquinate synthase">
    <location>
        <begin position="1"/>
        <end position="355"/>
    </location>
</feature>
<feature type="binding site" evidence="1">
    <location>
        <begin position="71"/>
        <end position="76"/>
    </location>
    <ligand>
        <name>NAD(+)</name>
        <dbReference type="ChEBI" id="CHEBI:57540"/>
    </ligand>
</feature>
<feature type="binding site" evidence="1">
    <location>
        <begin position="105"/>
        <end position="109"/>
    </location>
    <ligand>
        <name>NAD(+)</name>
        <dbReference type="ChEBI" id="CHEBI:57540"/>
    </ligand>
</feature>
<feature type="binding site" evidence="1">
    <location>
        <begin position="129"/>
        <end position="130"/>
    </location>
    <ligand>
        <name>NAD(+)</name>
        <dbReference type="ChEBI" id="CHEBI:57540"/>
    </ligand>
</feature>
<feature type="binding site" evidence="1">
    <location>
        <position position="142"/>
    </location>
    <ligand>
        <name>NAD(+)</name>
        <dbReference type="ChEBI" id="CHEBI:57540"/>
    </ligand>
</feature>
<feature type="binding site" evidence="1">
    <location>
        <position position="151"/>
    </location>
    <ligand>
        <name>NAD(+)</name>
        <dbReference type="ChEBI" id="CHEBI:57540"/>
    </ligand>
</feature>
<feature type="binding site" evidence="1">
    <location>
        <position position="184"/>
    </location>
    <ligand>
        <name>Zn(2+)</name>
        <dbReference type="ChEBI" id="CHEBI:29105"/>
    </ligand>
</feature>
<feature type="binding site" evidence="1">
    <location>
        <position position="246"/>
    </location>
    <ligand>
        <name>Zn(2+)</name>
        <dbReference type="ChEBI" id="CHEBI:29105"/>
    </ligand>
</feature>
<feature type="binding site" evidence="1">
    <location>
        <position position="263"/>
    </location>
    <ligand>
        <name>Zn(2+)</name>
        <dbReference type="ChEBI" id="CHEBI:29105"/>
    </ligand>
</feature>